<reference key="1">
    <citation type="submission" date="2002-07" db="EMBL/GenBank/DDBJ databases">
        <title>HCR gene orthologs in chimpanzee, pygmy chimpanzee, gorilla, and orangutan.</title>
        <authorList>
            <person name="Asumalahti K."/>
            <person name="Kere J."/>
        </authorList>
    </citation>
    <scope>NUCLEOTIDE SEQUENCE [GENOMIC DNA]</scope>
</reference>
<reference key="2">
    <citation type="journal article" date="2003" name="Proc. Natl. Acad. Sci. U.S.A.">
        <title>Comparative sequencing of human and chimpanzee MHC class I regions unveils insertions/deletions as the major path to genomic divergence.</title>
        <authorList>
            <person name="Anzai T."/>
            <person name="Shiina T."/>
            <person name="Kimura N."/>
            <person name="Yanagiya K."/>
            <person name="Kohara S."/>
            <person name="Shigenari A."/>
            <person name="Yamagata T."/>
            <person name="Kulski J.K."/>
            <person name="Naruse T.K."/>
            <person name="Fujimori Y."/>
            <person name="Fukuzumi Y."/>
            <person name="Yamazaki M."/>
            <person name="Tashiro H."/>
            <person name="Iwamoto C."/>
            <person name="Umehara Y."/>
            <person name="Imanishi T."/>
            <person name="Meyer A."/>
            <person name="Ikeo K."/>
            <person name="Gojobori T."/>
            <person name="Bahram S."/>
            <person name="Inoko H."/>
        </authorList>
    </citation>
    <scope>NUCLEOTIDE SEQUENCE [LARGE SCALE GENOMIC DNA]</scope>
</reference>
<proteinExistence type="inferred from homology"/>
<evidence type="ECO:0000250" key="1"/>
<evidence type="ECO:0000255" key="2"/>
<evidence type="ECO:0000256" key="3">
    <source>
        <dbReference type="SAM" id="MobiDB-lite"/>
    </source>
</evidence>
<evidence type="ECO:0000305" key="4"/>
<comment type="function">
    <text evidence="1">May be a regulator of keratinocyte proliferation or differentiation.</text>
</comment>
<comment type="subcellular location">
    <subcellularLocation>
        <location evidence="1">Cytoplasm</location>
    </subcellularLocation>
    <subcellularLocation>
        <location evidence="1">Nucleus</location>
    </subcellularLocation>
</comment>
<comment type="sequence caution" evidence="4">
    <conflict type="erroneous initiation">
        <sequence resource="EMBL-CDS" id="BAC78167"/>
    </conflict>
</comment>
<accession>Q8HZ60</accession>
<accession>Q7YR47</accession>
<name>CCHCR_PANTR</name>
<keyword id="KW-0175">Coiled coil</keyword>
<keyword id="KW-0963">Cytoplasm</keyword>
<keyword id="KW-0217">Developmental protein</keyword>
<keyword id="KW-0221">Differentiation</keyword>
<keyword id="KW-0539">Nucleus</keyword>
<keyword id="KW-1185">Reference proteome</keyword>
<dbReference type="EMBL" id="AY135777">
    <property type="protein sequence ID" value="AAN12279.1"/>
    <property type="molecule type" value="Genomic_DNA"/>
</dbReference>
<dbReference type="EMBL" id="AY135761">
    <property type="protein sequence ID" value="AAN12279.1"/>
    <property type="status" value="JOINED"/>
    <property type="molecule type" value="Genomic_DNA"/>
</dbReference>
<dbReference type="EMBL" id="AY135762">
    <property type="protein sequence ID" value="AAN12279.1"/>
    <property type="status" value="JOINED"/>
    <property type="molecule type" value="Genomic_DNA"/>
</dbReference>
<dbReference type="EMBL" id="AY135763">
    <property type="protein sequence ID" value="AAN12279.1"/>
    <property type="status" value="JOINED"/>
    <property type="molecule type" value="Genomic_DNA"/>
</dbReference>
<dbReference type="EMBL" id="AY135764">
    <property type="protein sequence ID" value="AAN12279.1"/>
    <property type="status" value="JOINED"/>
    <property type="molecule type" value="Genomic_DNA"/>
</dbReference>
<dbReference type="EMBL" id="AY135765">
    <property type="protein sequence ID" value="AAN12279.1"/>
    <property type="status" value="JOINED"/>
    <property type="molecule type" value="Genomic_DNA"/>
</dbReference>
<dbReference type="EMBL" id="AY135766">
    <property type="protein sequence ID" value="AAN12279.1"/>
    <property type="status" value="JOINED"/>
    <property type="molecule type" value="Genomic_DNA"/>
</dbReference>
<dbReference type="EMBL" id="AY135767">
    <property type="protein sequence ID" value="AAN12279.1"/>
    <property type="status" value="JOINED"/>
    <property type="molecule type" value="Genomic_DNA"/>
</dbReference>
<dbReference type="EMBL" id="AY135768">
    <property type="protein sequence ID" value="AAN12279.1"/>
    <property type="status" value="JOINED"/>
    <property type="molecule type" value="Genomic_DNA"/>
</dbReference>
<dbReference type="EMBL" id="AY135769">
    <property type="protein sequence ID" value="AAN12279.1"/>
    <property type="status" value="JOINED"/>
    <property type="molecule type" value="Genomic_DNA"/>
</dbReference>
<dbReference type="EMBL" id="AY135770">
    <property type="protein sequence ID" value="AAN12279.1"/>
    <property type="status" value="JOINED"/>
    <property type="molecule type" value="Genomic_DNA"/>
</dbReference>
<dbReference type="EMBL" id="AY135771">
    <property type="protein sequence ID" value="AAN12279.1"/>
    <property type="status" value="JOINED"/>
    <property type="molecule type" value="Genomic_DNA"/>
</dbReference>
<dbReference type="EMBL" id="AY135772">
    <property type="protein sequence ID" value="AAN12279.1"/>
    <property type="status" value="JOINED"/>
    <property type="molecule type" value="Genomic_DNA"/>
</dbReference>
<dbReference type="EMBL" id="AY135773">
    <property type="protein sequence ID" value="AAN12279.1"/>
    <property type="status" value="JOINED"/>
    <property type="molecule type" value="Genomic_DNA"/>
</dbReference>
<dbReference type="EMBL" id="AY135774">
    <property type="protein sequence ID" value="AAN12279.1"/>
    <property type="status" value="JOINED"/>
    <property type="molecule type" value="Genomic_DNA"/>
</dbReference>
<dbReference type="EMBL" id="AY135775">
    <property type="protein sequence ID" value="AAN12279.1"/>
    <property type="status" value="JOINED"/>
    <property type="molecule type" value="Genomic_DNA"/>
</dbReference>
<dbReference type="EMBL" id="AY135776">
    <property type="protein sequence ID" value="AAN12279.1"/>
    <property type="status" value="JOINED"/>
    <property type="molecule type" value="Genomic_DNA"/>
</dbReference>
<dbReference type="EMBL" id="BA000041">
    <property type="protein sequence ID" value="BAC78167.1"/>
    <property type="status" value="ALT_INIT"/>
    <property type="molecule type" value="Genomic_DNA"/>
</dbReference>
<dbReference type="SMR" id="Q8HZ60"/>
<dbReference type="FunCoup" id="Q8HZ60">
    <property type="interactions" value="663"/>
</dbReference>
<dbReference type="STRING" id="9598.ENSPTRP00000065042"/>
<dbReference type="InParanoid" id="Q8HZ60"/>
<dbReference type="Proteomes" id="UP000002277">
    <property type="component" value="Unplaced"/>
</dbReference>
<dbReference type="GO" id="GO:0005814">
    <property type="term" value="C:centriole"/>
    <property type="evidence" value="ECO:0000250"/>
    <property type="project" value="UniProtKB"/>
</dbReference>
<dbReference type="GO" id="GO:0005737">
    <property type="term" value="C:cytoplasm"/>
    <property type="evidence" value="ECO:0007669"/>
    <property type="project" value="UniProtKB-SubCell"/>
</dbReference>
<dbReference type="GO" id="GO:0005634">
    <property type="term" value="C:nucleus"/>
    <property type="evidence" value="ECO:0007669"/>
    <property type="project" value="UniProtKB-SubCell"/>
</dbReference>
<dbReference type="GO" id="GO:0030154">
    <property type="term" value="P:cell differentiation"/>
    <property type="evidence" value="ECO:0007669"/>
    <property type="project" value="UniProtKB-KW"/>
</dbReference>
<dbReference type="GO" id="GO:0006611">
    <property type="term" value="P:protein export from nucleus"/>
    <property type="evidence" value="ECO:0000318"/>
    <property type="project" value="GO_Central"/>
</dbReference>
<dbReference type="InterPro" id="IPR009800">
    <property type="entry name" value="HCR"/>
</dbReference>
<dbReference type="PANTHER" id="PTHR46822">
    <property type="entry name" value="COILED-COIL ALPHA-HELICAL ROD PROTEIN 1"/>
    <property type="match status" value="1"/>
</dbReference>
<dbReference type="PANTHER" id="PTHR46822:SF1">
    <property type="entry name" value="COILED-COIL ALPHA-HELICAL ROD PROTEIN 1"/>
    <property type="match status" value="1"/>
</dbReference>
<dbReference type="Pfam" id="PF07111">
    <property type="entry name" value="HCR"/>
    <property type="match status" value="1"/>
</dbReference>
<feature type="chain" id="PRO_0000089419" description="Coiled-coil alpha-helical rod protein 1">
    <location>
        <begin position="1"/>
        <end position="782"/>
    </location>
</feature>
<feature type="region of interest" description="Disordered" evidence="3">
    <location>
        <begin position="62"/>
        <end position="82"/>
    </location>
</feature>
<feature type="region of interest" description="Disordered" evidence="3">
    <location>
        <begin position="177"/>
        <end position="218"/>
    </location>
</feature>
<feature type="coiled-coil region" evidence="2">
    <location>
        <begin position="82"/>
        <end position="314"/>
    </location>
</feature>
<feature type="coiled-coil region" evidence="2">
    <location>
        <begin position="344"/>
        <end position="437"/>
    </location>
</feature>
<feature type="coiled-coil region" evidence="2">
    <location>
        <begin position="498"/>
        <end position="691"/>
    </location>
</feature>
<feature type="compositionally biased region" description="Basic and acidic residues" evidence="3">
    <location>
        <begin position="62"/>
        <end position="74"/>
    </location>
</feature>
<feature type="compositionally biased region" description="Basic and acidic residues" evidence="3">
    <location>
        <begin position="208"/>
        <end position="218"/>
    </location>
</feature>
<feature type="sequence conflict" description="In Ref. 2; BAC78167." evidence="4" ref="2">
    <original>Q</original>
    <variation>H</variation>
    <location>
        <position position="288"/>
    </location>
</feature>
<feature type="sequence conflict" description="In Ref. 2; BAC78167." evidence="4" ref="2">
    <original>S</original>
    <variation>T</variation>
    <location>
        <position position="319"/>
    </location>
</feature>
<feature type="sequence conflict" description="In Ref. 2; BAC78167." evidence="4" ref="2">
    <original>R</original>
    <variation>H</variation>
    <location>
        <position position="638"/>
    </location>
</feature>
<feature type="sequence conflict" description="In Ref. 2; BAC78167." evidence="4" ref="2">
    <original>R</original>
    <variation>Q</variation>
    <location>
        <position position="671"/>
    </location>
</feature>
<gene>
    <name type="primary">CCHCR1</name>
    <name type="synonym">HCR</name>
</gene>
<sequence length="782" mass="88660">MFPPSGSTGLIPPSHFQARPLSTLPRMAPTWLSDIPLVQPPGHQDVSERRLDTQRPQVTMWERDVSSDRQEPGRRGRSWGLEGSQALSQQAEVIARQLQELRRLEEEVRLLRETSLQQKMRLEAQAMELEALARAEKAGRAEAEGLRAALAGAEVVRKNLEEGSQRELEEVQRLHQEQLSSLTQAHEEALSSLTSKAEGLEKSLSSLETRRAGEAKELAEAQREAELLRKQLSKTQEDLEAQVTLVENLRKYVGEQVPSEVHSQTWELERQKLLETMQHLQEDRDSLQATVELLQVRVQSLTHILALQEEELTRKVQPSDSLEPEFTRKCQSLLNRWREKVFALMVQLKAQELEHSDSVKQLKGQVASLQEKVTSQSQEQAILQRSLQDKAAEVEVERMGAKGLQLELSRAQEARRRWQQQTASAEEQLRLVVNAVSSSQIWLETTMAKVEEAAAQLPSLNNRLSYAVRKVHTIRGLIARKLALAQLRQESCPLPPPVADVSLELQQLREERNRLDAELQLSARLIQQEVGRAREQGEAERQQLSKVAQQLEQELQQTQESLASLGLQLEVARQGQQESTEEAASLRQELTQQQELYGQALQEKVAEVETRLREQLSDTERRLNEARREHAKAVVSLRQIQRRAAQEKERSQELRRLQEEARKEEGQRLARRLQELERDKNLMLATLQQEGLLSRYKQQRLLTVLPSLLDKKKSVVSSPRPPECSASAPIAAAVPTRESIKGSLSVLLDDLQGLSEAISKEEAVCQGDNLDRCSSSNPQMSS</sequence>
<organism>
    <name type="scientific">Pan troglodytes</name>
    <name type="common">Chimpanzee</name>
    <dbReference type="NCBI Taxonomy" id="9598"/>
    <lineage>
        <taxon>Eukaryota</taxon>
        <taxon>Metazoa</taxon>
        <taxon>Chordata</taxon>
        <taxon>Craniata</taxon>
        <taxon>Vertebrata</taxon>
        <taxon>Euteleostomi</taxon>
        <taxon>Mammalia</taxon>
        <taxon>Eutheria</taxon>
        <taxon>Euarchontoglires</taxon>
        <taxon>Primates</taxon>
        <taxon>Haplorrhini</taxon>
        <taxon>Catarrhini</taxon>
        <taxon>Hominidae</taxon>
        <taxon>Pan</taxon>
    </lineage>
</organism>
<protein>
    <recommendedName>
        <fullName>Coiled-coil alpha-helical rod protein 1</fullName>
    </recommendedName>
    <alternativeName>
        <fullName>Alpha-helical coiled-coil rod protein</fullName>
    </alternativeName>
</protein>